<reference key="1">
    <citation type="journal article" date="2007" name="Archaea">
        <title>The genome of Hyperthermus butylicus: a sulfur-reducing, peptide fermenting, neutrophilic Crenarchaeote growing up to 108 degrees C.</title>
        <authorList>
            <person name="Bruegger K."/>
            <person name="Chen L."/>
            <person name="Stark M."/>
            <person name="Zibat A."/>
            <person name="Redder P."/>
            <person name="Ruepp A."/>
            <person name="Awayez M."/>
            <person name="She Q."/>
            <person name="Garrett R.A."/>
            <person name="Klenk H.-P."/>
        </authorList>
    </citation>
    <scope>NUCLEOTIDE SEQUENCE [LARGE SCALE GENOMIC DNA]</scope>
    <source>
        <strain>DSM 5456 / JCM 9403 / PLM1-5</strain>
    </source>
</reference>
<sequence length="409" mass="45109">MPRNIVVESVKLQPVEEQSVELVERKGLGHPDTIADAAAEISSQYLSRYYIEKYGTILHHNLDKVLVVGGQAAPRFGGGEVLQPIYIIVSGRATTEVRLPDGKTERIPIGTIILRAVKEWIREKFRFLDPESHIIVDYKVGQGSADLVGIYELGKDSVPLANDTSVGVGFAPFSTLEQLVLETERLLNSKEFKEKNPEVGEDIKVMGLRRGRKIELTIAAAIISSLVQDLDHYLSVKEAIKEAVLDLASRIAPDYDVEVYVNTADKPDKGIVYITVTGTSAEHGDDGMTGRGNRSYGLITPLRPMSLEAAAGKNPVSHVGKIYNVMALNIARRIYDNVSGIREVYVKLLSQIGRPINDPLIANIKVVSEKPGEPLPSNALREIEAIVEEELDKYQELTKLFVEGKITIF</sequence>
<organism>
    <name type="scientific">Hyperthermus butylicus (strain DSM 5456 / JCM 9403 / PLM1-5)</name>
    <dbReference type="NCBI Taxonomy" id="415426"/>
    <lineage>
        <taxon>Archaea</taxon>
        <taxon>Thermoproteota</taxon>
        <taxon>Thermoprotei</taxon>
        <taxon>Desulfurococcales</taxon>
        <taxon>Pyrodictiaceae</taxon>
        <taxon>Hyperthermus</taxon>
    </lineage>
</organism>
<accession>A2BIZ8</accession>
<keyword id="KW-0067">ATP-binding</keyword>
<keyword id="KW-0460">Magnesium</keyword>
<keyword id="KW-0547">Nucleotide-binding</keyword>
<keyword id="KW-0554">One-carbon metabolism</keyword>
<keyword id="KW-1185">Reference proteome</keyword>
<keyword id="KW-0808">Transferase</keyword>
<name>METK_HYPBU</name>
<comment type="function">
    <text evidence="1">Catalyzes the formation of S-adenosylmethionine from methionine and ATP.</text>
</comment>
<comment type="catalytic activity">
    <reaction evidence="1">
        <text>L-methionine + ATP + H2O = S-adenosyl-L-methionine + phosphate + diphosphate</text>
        <dbReference type="Rhea" id="RHEA:21080"/>
        <dbReference type="ChEBI" id="CHEBI:15377"/>
        <dbReference type="ChEBI" id="CHEBI:30616"/>
        <dbReference type="ChEBI" id="CHEBI:33019"/>
        <dbReference type="ChEBI" id="CHEBI:43474"/>
        <dbReference type="ChEBI" id="CHEBI:57844"/>
        <dbReference type="ChEBI" id="CHEBI:59789"/>
        <dbReference type="EC" id="2.5.1.6"/>
    </reaction>
</comment>
<comment type="cofactor">
    <cofactor evidence="1">
        <name>Mg(2+)</name>
        <dbReference type="ChEBI" id="CHEBI:18420"/>
    </cofactor>
</comment>
<comment type="pathway">
    <text evidence="1">Amino-acid biosynthesis; S-adenosyl-L-methionine biosynthesis; S-adenosyl-L-methionine from L-methionine: step 1/1.</text>
</comment>
<comment type="similarity">
    <text evidence="1">Belongs to the AdoMet synthase 2 family.</text>
</comment>
<evidence type="ECO:0000255" key="1">
    <source>
        <dbReference type="HAMAP-Rule" id="MF_00136"/>
    </source>
</evidence>
<gene>
    <name evidence="1" type="primary">mat</name>
    <name type="ordered locus">Hbut_0083</name>
</gene>
<protein>
    <recommendedName>
        <fullName evidence="1">S-adenosylmethionine synthase</fullName>
        <shortName evidence="1">AdoMet synthase</shortName>
        <ecNumber evidence="1">2.5.1.6</ecNumber>
    </recommendedName>
    <alternativeName>
        <fullName evidence="1">Methionine adenosyltransferase</fullName>
    </alternativeName>
</protein>
<proteinExistence type="inferred from homology"/>
<feature type="chain" id="PRO_1000196738" description="S-adenosylmethionine synthase">
    <location>
        <begin position="1"/>
        <end position="409"/>
    </location>
</feature>
<feature type="binding site" evidence="1">
    <location>
        <begin position="141"/>
        <end position="146"/>
    </location>
    <ligand>
        <name>ATP</name>
        <dbReference type="ChEBI" id="CHEBI:30616"/>
    </ligand>
</feature>
<dbReference type="EC" id="2.5.1.6" evidence="1"/>
<dbReference type="EMBL" id="CP000493">
    <property type="protein sequence ID" value="ABM79959.1"/>
    <property type="molecule type" value="Genomic_DNA"/>
</dbReference>
<dbReference type="RefSeq" id="WP_011821276.1">
    <property type="nucleotide sequence ID" value="NC_008818.1"/>
</dbReference>
<dbReference type="SMR" id="A2BIZ8"/>
<dbReference type="STRING" id="415426.Hbut_0083"/>
<dbReference type="EnsemblBacteria" id="ABM79959">
    <property type="protein sequence ID" value="ABM79959"/>
    <property type="gene ID" value="Hbut_0083"/>
</dbReference>
<dbReference type="GeneID" id="4782731"/>
<dbReference type="KEGG" id="hbu:Hbut_0083"/>
<dbReference type="eggNOG" id="arCOG01678">
    <property type="taxonomic scope" value="Archaea"/>
</dbReference>
<dbReference type="HOGENOM" id="CLU_057642_0_0_2"/>
<dbReference type="OrthoDB" id="204488at2157"/>
<dbReference type="UniPathway" id="UPA00315">
    <property type="reaction ID" value="UER00080"/>
</dbReference>
<dbReference type="Proteomes" id="UP000002593">
    <property type="component" value="Chromosome"/>
</dbReference>
<dbReference type="GO" id="GO:0005524">
    <property type="term" value="F:ATP binding"/>
    <property type="evidence" value="ECO:0007669"/>
    <property type="project" value="UniProtKB-UniRule"/>
</dbReference>
<dbReference type="GO" id="GO:0000287">
    <property type="term" value="F:magnesium ion binding"/>
    <property type="evidence" value="ECO:0007669"/>
    <property type="project" value="UniProtKB-UniRule"/>
</dbReference>
<dbReference type="GO" id="GO:0004478">
    <property type="term" value="F:methionine adenosyltransferase activity"/>
    <property type="evidence" value="ECO:0007669"/>
    <property type="project" value="UniProtKB-UniRule"/>
</dbReference>
<dbReference type="GO" id="GO:0006730">
    <property type="term" value="P:one-carbon metabolic process"/>
    <property type="evidence" value="ECO:0007669"/>
    <property type="project" value="UniProtKB-KW"/>
</dbReference>
<dbReference type="GO" id="GO:0006556">
    <property type="term" value="P:S-adenosylmethionine biosynthetic process"/>
    <property type="evidence" value="ECO:0007669"/>
    <property type="project" value="UniProtKB-UniRule"/>
</dbReference>
<dbReference type="Gene3D" id="3.30.300.10">
    <property type="match status" value="1"/>
</dbReference>
<dbReference type="Gene3D" id="3.30.300.280">
    <property type="entry name" value="S-adenosylmethionine synthetase, C-terminal domain"/>
    <property type="match status" value="2"/>
</dbReference>
<dbReference type="HAMAP" id="MF_00136">
    <property type="entry name" value="S_AdoMet_synth2"/>
    <property type="match status" value="1"/>
</dbReference>
<dbReference type="InterPro" id="IPR027790">
    <property type="entry name" value="AdoMet_synthase_2_family"/>
</dbReference>
<dbReference type="InterPro" id="IPR042544">
    <property type="entry name" value="AdoMet_synthase_3"/>
</dbReference>
<dbReference type="InterPro" id="IPR002795">
    <property type="entry name" value="S-AdoMet_synthetase_arc"/>
</dbReference>
<dbReference type="NCBIfam" id="NF003365">
    <property type="entry name" value="PRK04439.1-4"/>
    <property type="match status" value="1"/>
</dbReference>
<dbReference type="NCBIfam" id="NF003366">
    <property type="entry name" value="PRK04439.1-5"/>
    <property type="match status" value="1"/>
</dbReference>
<dbReference type="PANTHER" id="PTHR36697">
    <property type="entry name" value="S-ADENOSYLMETHIONINE SYNTHASE"/>
    <property type="match status" value="1"/>
</dbReference>
<dbReference type="PANTHER" id="PTHR36697:SF1">
    <property type="entry name" value="S-ADENOSYLMETHIONINE SYNTHASE"/>
    <property type="match status" value="1"/>
</dbReference>
<dbReference type="Pfam" id="PF01941">
    <property type="entry name" value="AdoMet_Synthase"/>
    <property type="match status" value="1"/>
</dbReference>